<name>RLA0_CHICK</name>
<sequence>MPREDRATWKSNYFMKIIQLLDDYPKCFVVGADNVGSKQMQQIRMSLRGKAVVLMGKNTMMRKAIRGHLENNPALEKLLPHIRGNVGFVFTKEDLTEIRDMLLANKVPAAARAGAIAPCDVTVPAQNTGLGPEKTSFFQALGITTKISRGTIEILSDVQLIKTGDKVGASEATLLNMLNISPFSFGLVIQQVFDNGSIYNPEVLDITEETLHKRFLEGVRNVASVCLQIGYPTIASVPHSIVNGYKRVLAVAVETDYTFPLAEKVKAFLADPSAFVAAAPVVVETAAPAAAAAPAKEAPKEESEESDEDMGFGLFD</sequence>
<reference key="1">
    <citation type="journal article" date="1995" name="Biochem. Mol. Biol. Int.">
        <title>Chicken acidic ribosomal phosphoprotein PO: isolation and molecular characterization of cDNA clones.</title>
        <authorList>
            <person name="Wang H."/>
            <person name="Meury L."/>
            <person name="Pinsonneault S."/>
            <person name="Morais R."/>
        </authorList>
    </citation>
    <scope>NUCLEOTIDE SEQUENCE [MRNA]</scope>
    <source>
        <strain>White leghorn</strain>
        <tissue>Liver</tissue>
    </source>
</reference>
<evidence type="ECO:0000250" key="1"/>
<evidence type="ECO:0000250" key="2">
    <source>
        <dbReference type="UniProtKB" id="P05388"/>
    </source>
</evidence>
<evidence type="ECO:0000256" key="3">
    <source>
        <dbReference type="SAM" id="MobiDB-lite"/>
    </source>
</evidence>
<evidence type="ECO:0000305" key="4"/>
<comment type="function">
    <text>Ribosomal protein P0 is the functional equivalent of E.coli protein L10.</text>
</comment>
<comment type="subunit">
    <text>P0 forms a pentameric complex by interaction with dimers of P1 and P2.</text>
</comment>
<comment type="subcellular location">
    <subcellularLocation>
        <location evidence="2">Nucleus</location>
    </subcellularLocation>
    <subcellularLocation>
        <location evidence="2">Cytoplasm</location>
    </subcellularLocation>
</comment>
<comment type="PTM">
    <text evidence="1">Phosphorylated.</text>
</comment>
<comment type="similarity">
    <text evidence="4">Belongs to the universal ribosomal protein uL10 family.</text>
</comment>
<accession>P47826</accession>
<keyword id="KW-0002">3D-structure</keyword>
<keyword id="KW-0963">Cytoplasm</keyword>
<keyword id="KW-0539">Nucleus</keyword>
<keyword id="KW-0597">Phosphoprotein</keyword>
<keyword id="KW-1185">Reference proteome</keyword>
<keyword id="KW-0687">Ribonucleoprotein</keyword>
<keyword id="KW-0689">Ribosomal protein</keyword>
<dbReference type="EMBL" id="L28704">
    <property type="protein sequence ID" value="AAC38020.1"/>
    <property type="molecule type" value="mRNA"/>
</dbReference>
<dbReference type="PIR" id="I50151">
    <property type="entry name" value="I50151"/>
</dbReference>
<dbReference type="RefSeq" id="NP_990318.1">
    <property type="nucleotide sequence ID" value="NM_204987.2"/>
</dbReference>
<dbReference type="PDB" id="8Q87">
    <property type="method" value="EM"/>
    <property type="resolution" value="2.40 A"/>
    <property type="chains" value="Bs=1-316"/>
</dbReference>
<dbReference type="PDBsum" id="8Q87"/>
<dbReference type="SMR" id="P47826"/>
<dbReference type="BioGRID" id="676109">
    <property type="interactions" value="1"/>
</dbReference>
<dbReference type="FunCoup" id="P47826">
    <property type="interactions" value="2524"/>
</dbReference>
<dbReference type="STRING" id="9031.ENSGALP00000011717"/>
<dbReference type="PaxDb" id="9031-ENSGALP00000011717"/>
<dbReference type="GeneID" id="395835"/>
<dbReference type="KEGG" id="gga:395835"/>
<dbReference type="CTD" id="6175"/>
<dbReference type="VEuPathDB" id="HostDB:geneid_395835"/>
<dbReference type="eggNOG" id="KOG0815">
    <property type="taxonomic scope" value="Eukaryota"/>
</dbReference>
<dbReference type="InParanoid" id="P47826"/>
<dbReference type="OMA" id="DMNPFKL"/>
<dbReference type="OrthoDB" id="10259902at2759"/>
<dbReference type="PhylomeDB" id="P47826"/>
<dbReference type="PRO" id="PR:P47826"/>
<dbReference type="Proteomes" id="UP000000539">
    <property type="component" value="Unassembled WGS sequence"/>
</dbReference>
<dbReference type="GO" id="GO:0022625">
    <property type="term" value="C:cytosolic large ribosomal subunit"/>
    <property type="evidence" value="ECO:0000318"/>
    <property type="project" value="GO_Central"/>
</dbReference>
<dbReference type="GO" id="GO:0005634">
    <property type="term" value="C:nucleus"/>
    <property type="evidence" value="ECO:0007669"/>
    <property type="project" value="UniProtKB-SubCell"/>
</dbReference>
<dbReference type="GO" id="GO:0070180">
    <property type="term" value="F:large ribosomal subunit rRNA binding"/>
    <property type="evidence" value="ECO:0000318"/>
    <property type="project" value="GO_Central"/>
</dbReference>
<dbReference type="GO" id="GO:0003735">
    <property type="term" value="F:structural constituent of ribosome"/>
    <property type="evidence" value="ECO:0000318"/>
    <property type="project" value="GO_Central"/>
</dbReference>
<dbReference type="GO" id="GO:0002181">
    <property type="term" value="P:cytoplasmic translation"/>
    <property type="evidence" value="ECO:0000318"/>
    <property type="project" value="GO_Central"/>
</dbReference>
<dbReference type="GO" id="GO:0042254">
    <property type="term" value="P:ribosome biogenesis"/>
    <property type="evidence" value="ECO:0007669"/>
    <property type="project" value="InterPro"/>
</dbReference>
<dbReference type="CDD" id="cd05795">
    <property type="entry name" value="Ribosomal_P0_L10e"/>
    <property type="match status" value="1"/>
</dbReference>
<dbReference type="FunFam" id="3.30.70.1730:FF:000002">
    <property type="entry name" value="60S acidic ribosomal protein P0"/>
    <property type="match status" value="1"/>
</dbReference>
<dbReference type="FunFam" id="3.90.105.20:FF:000001">
    <property type="entry name" value="60S acidic ribosomal protein P0"/>
    <property type="match status" value="1"/>
</dbReference>
<dbReference type="Gene3D" id="3.30.70.1730">
    <property type="match status" value="1"/>
</dbReference>
<dbReference type="Gene3D" id="3.90.105.20">
    <property type="match status" value="1"/>
</dbReference>
<dbReference type="InterPro" id="IPR050323">
    <property type="entry name" value="Ribosomal_protein_uL10"/>
</dbReference>
<dbReference type="InterPro" id="IPR001790">
    <property type="entry name" value="Ribosomal_uL10"/>
</dbReference>
<dbReference type="InterPro" id="IPR040637">
    <property type="entry name" value="Ribosomal_uL10-like_insert"/>
</dbReference>
<dbReference type="InterPro" id="IPR043164">
    <property type="entry name" value="Ribosomal_uL10-like_insert_sf"/>
</dbReference>
<dbReference type="InterPro" id="IPR043141">
    <property type="entry name" value="Ribosomal_uL10-like_sf"/>
</dbReference>
<dbReference type="InterPro" id="IPR030670">
    <property type="entry name" value="uL10_eukaryotes"/>
</dbReference>
<dbReference type="PANTHER" id="PTHR45699">
    <property type="entry name" value="60S ACIDIC RIBOSOMAL PROTEIN P0"/>
    <property type="match status" value="1"/>
</dbReference>
<dbReference type="PANTHER" id="PTHR45699:SF3">
    <property type="entry name" value="LARGE RIBOSOMAL SUBUNIT PROTEIN UL10"/>
    <property type="match status" value="1"/>
</dbReference>
<dbReference type="Pfam" id="PF00428">
    <property type="entry name" value="Ribosomal_60s"/>
    <property type="match status" value="1"/>
</dbReference>
<dbReference type="Pfam" id="PF00466">
    <property type="entry name" value="Ribosomal_L10"/>
    <property type="match status" value="1"/>
</dbReference>
<dbReference type="Pfam" id="PF17777">
    <property type="entry name" value="RL10P_insert"/>
    <property type="match status" value="1"/>
</dbReference>
<dbReference type="PIRSF" id="PIRSF039087">
    <property type="entry name" value="L10E"/>
    <property type="match status" value="1"/>
</dbReference>
<dbReference type="SUPFAM" id="SSF160369">
    <property type="entry name" value="Ribosomal protein L10-like"/>
    <property type="match status" value="1"/>
</dbReference>
<feature type="chain" id="PRO_0000154762" description="Large ribosomal subunit protein uL10">
    <location>
        <begin position="1"/>
        <end position="316"/>
    </location>
</feature>
<feature type="region of interest" description="Disordered" evidence="3">
    <location>
        <begin position="289"/>
        <end position="316"/>
    </location>
</feature>
<organism>
    <name type="scientific">Gallus gallus</name>
    <name type="common">Chicken</name>
    <dbReference type="NCBI Taxonomy" id="9031"/>
    <lineage>
        <taxon>Eukaryota</taxon>
        <taxon>Metazoa</taxon>
        <taxon>Chordata</taxon>
        <taxon>Craniata</taxon>
        <taxon>Vertebrata</taxon>
        <taxon>Euteleostomi</taxon>
        <taxon>Archelosauria</taxon>
        <taxon>Archosauria</taxon>
        <taxon>Dinosauria</taxon>
        <taxon>Saurischia</taxon>
        <taxon>Theropoda</taxon>
        <taxon>Coelurosauria</taxon>
        <taxon>Aves</taxon>
        <taxon>Neognathae</taxon>
        <taxon>Galloanserae</taxon>
        <taxon>Galliformes</taxon>
        <taxon>Phasianidae</taxon>
        <taxon>Phasianinae</taxon>
        <taxon>Gallus</taxon>
    </lineage>
</organism>
<proteinExistence type="evidence at protein level"/>
<protein>
    <recommendedName>
        <fullName evidence="4">Large ribosomal subunit protein uL10</fullName>
    </recommendedName>
    <alternativeName>
        <fullName>60S acidic ribosomal protein P0</fullName>
    </alternativeName>
    <alternativeName>
        <fullName>60S ribosomal protein L10E</fullName>
    </alternativeName>
</protein>
<gene>
    <name type="primary">RPLP0</name>
</gene>